<reference key="1">
    <citation type="journal article" date="2002" name="Proc. Natl. Acad. Sci. U.S.A.">
        <title>Genome sequence of Streptococcus mutans UA159, a cariogenic dental pathogen.</title>
        <authorList>
            <person name="Ajdic D.J."/>
            <person name="McShan W.M."/>
            <person name="McLaughlin R.E."/>
            <person name="Savic G."/>
            <person name="Chang J."/>
            <person name="Carson M.B."/>
            <person name="Primeaux C."/>
            <person name="Tian R."/>
            <person name="Kenton S."/>
            <person name="Jia H.G."/>
            <person name="Lin S.P."/>
            <person name="Qian Y."/>
            <person name="Li S."/>
            <person name="Zhu H."/>
            <person name="Najar F.Z."/>
            <person name="Lai H."/>
            <person name="White J."/>
            <person name="Roe B.A."/>
            <person name="Ferretti J.J."/>
        </authorList>
    </citation>
    <scope>NUCLEOTIDE SEQUENCE [LARGE SCALE GENOMIC DNA]</scope>
    <source>
        <strain>ATCC 700610 / UA159</strain>
    </source>
</reference>
<gene>
    <name evidence="1" type="primary">rpmI</name>
    <name type="ordered locus">SMU_698</name>
</gene>
<organism>
    <name type="scientific">Streptococcus mutans serotype c (strain ATCC 700610 / UA159)</name>
    <dbReference type="NCBI Taxonomy" id="210007"/>
    <lineage>
        <taxon>Bacteria</taxon>
        <taxon>Bacillati</taxon>
        <taxon>Bacillota</taxon>
        <taxon>Bacilli</taxon>
        <taxon>Lactobacillales</taxon>
        <taxon>Streptococcaceae</taxon>
        <taxon>Streptococcus</taxon>
    </lineage>
</organism>
<proteinExistence type="inferred from homology"/>
<accession>Q8DV21</accession>
<name>RL35_STRMU</name>
<dbReference type="EMBL" id="AE014133">
    <property type="protein sequence ID" value="AAN58430.1"/>
    <property type="molecule type" value="Genomic_DNA"/>
</dbReference>
<dbReference type="RefSeq" id="NP_721124.1">
    <property type="nucleotide sequence ID" value="NC_004350.2"/>
</dbReference>
<dbReference type="RefSeq" id="WP_002263327.1">
    <property type="nucleotide sequence ID" value="NC_004350.2"/>
</dbReference>
<dbReference type="SMR" id="Q8DV21"/>
<dbReference type="STRING" id="210007.SMU_698"/>
<dbReference type="KEGG" id="smu:SMU_698"/>
<dbReference type="PATRIC" id="fig|210007.7.peg.620"/>
<dbReference type="eggNOG" id="COG0291">
    <property type="taxonomic scope" value="Bacteria"/>
</dbReference>
<dbReference type="HOGENOM" id="CLU_169643_3_0_9"/>
<dbReference type="OrthoDB" id="47476at2"/>
<dbReference type="PhylomeDB" id="Q8DV21"/>
<dbReference type="Proteomes" id="UP000002512">
    <property type="component" value="Chromosome"/>
</dbReference>
<dbReference type="GO" id="GO:0022625">
    <property type="term" value="C:cytosolic large ribosomal subunit"/>
    <property type="evidence" value="ECO:0007669"/>
    <property type="project" value="TreeGrafter"/>
</dbReference>
<dbReference type="GO" id="GO:0003735">
    <property type="term" value="F:structural constituent of ribosome"/>
    <property type="evidence" value="ECO:0007669"/>
    <property type="project" value="InterPro"/>
</dbReference>
<dbReference type="GO" id="GO:0006412">
    <property type="term" value="P:translation"/>
    <property type="evidence" value="ECO:0007669"/>
    <property type="project" value="UniProtKB-UniRule"/>
</dbReference>
<dbReference type="FunFam" id="4.10.410.60:FF:000001">
    <property type="entry name" value="50S ribosomal protein L35"/>
    <property type="match status" value="1"/>
</dbReference>
<dbReference type="Gene3D" id="4.10.410.60">
    <property type="match status" value="1"/>
</dbReference>
<dbReference type="HAMAP" id="MF_00514">
    <property type="entry name" value="Ribosomal_bL35"/>
    <property type="match status" value="1"/>
</dbReference>
<dbReference type="InterPro" id="IPR001706">
    <property type="entry name" value="Ribosomal_bL35"/>
</dbReference>
<dbReference type="InterPro" id="IPR021137">
    <property type="entry name" value="Ribosomal_bL35-like"/>
</dbReference>
<dbReference type="InterPro" id="IPR018265">
    <property type="entry name" value="Ribosomal_bL35_CS"/>
</dbReference>
<dbReference type="InterPro" id="IPR037229">
    <property type="entry name" value="Ribosomal_bL35_sf"/>
</dbReference>
<dbReference type="NCBIfam" id="TIGR00001">
    <property type="entry name" value="rpmI_bact"/>
    <property type="match status" value="1"/>
</dbReference>
<dbReference type="PANTHER" id="PTHR33343">
    <property type="entry name" value="54S RIBOSOMAL PROTEIN BL35M"/>
    <property type="match status" value="1"/>
</dbReference>
<dbReference type="PANTHER" id="PTHR33343:SF1">
    <property type="entry name" value="LARGE RIBOSOMAL SUBUNIT PROTEIN BL35M"/>
    <property type="match status" value="1"/>
</dbReference>
<dbReference type="Pfam" id="PF01632">
    <property type="entry name" value="Ribosomal_L35p"/>
    <property type="match status" value="1"/>
</dbReference>
<dbReference type="PRINTS" id="PR00064">
    <property type="entry name" value="RIBOSOMALL35"/>
</dbReference>
<dbReference type="SUPFAM" id="SSF143034">
    <property type="entry name" value="L35p-like"/>
    <property type="match status" value="1"/>
</dbReference>
<dbReference type="PROSITE" id="PS00936">
    <property type="entry name" value="RIBOSOMAL_L35"/>
    <property type="match status" value="1"/>
</dbReference>
<comment type="similarity">
    <text evidence="1">Belongs to the bacterial ribosomal protein bL35 family.</text>
</comment>
<sequence length="66" mass="7836">MPKQKTHRASAKRFKRTGSGGLKRFRAYTSHRFHGKTKKQRRHLRKASMVHSGDFKRIKSMLTRLK</sequence>
<keyword id="KW-1185">Reference proteome</keyword>
<keyword id="KW-0687">Ribonucleoprotein</keyword>
<keyword id="KW-0689">Ribosomal protein</keyword>
<protein>
    <recommendedName>
        <fullName evidence="1">Large ribosomal subunit protein bL35</fullName>
    </recommendedName>
    <alternativeName>
        <fullName evidence="3">50S ribosomal protein L35</fullName>
    </alternativeName>
</protein>
<evidence type="ECO:0000255" key="1">
    <source>
        <dbReference type="HAMAP-Rule" id="MF_00514"/>
    </source>
</evidence>
<evidence type="ECO:0000256" key="2">
    <source>
        <dbReference type="SAM" id="MobiDB-lite"/>
    </source>
</evidence>
<evidence type="ECO:0000305" key="3"/>
<feature type="chain" id="PRO_0000177431" description="Large ribosomal subunit protein bL35">
    <location>
        <begin position="1"/>
        <end position="66"/>
    </location>
</feature>
<feature type="region of interest" description="Disordered" evidence="2">
    <location>
        <begin position="1"/>
        <end position="21"/>
    </location>
</feature>
<feature type="compositionally biased region" description="Basic residues" evidence="2">
    <location>
        <begin position="1"/>
        <end position="16"/>
    </location>
</feature>